<accession>Q8DLF2</accession>
<dbReference type="EC" id="3.1.3.11" evidence="1"/>
<dbReference type="EMBL" id="BA000039">
    <property type="protein sequence ID" value="BAC08093.1"/>
    <property type="molecule type" value="Genomic_DNA"/>
</dbReference>
<dbReference type="RefSeq" id="NP_681331.1">
    <property type="nucleotide sequence ID" value="NC_004113.1"/>
</dbReference>
<dbReference type="RefSeq" id="WP_011056391.1">
    <property type="nucleotide sequence ID" value="NC_004113.1"/>
</dbReference>
<dbReference type="SMR" id="Q8DLF2"/>
<dbReference type="STRING" id="197221.gene:10747131"/>
<dbReference type="EnsemblBacteria" id="BAC08093">
    <property type="protein sequence ID" value="BAC08093"/>
    <property type="gene ID" value="BAC08093"/>
</dbReference>
<dbReference type="KEGG" id="tel:tll0541"/>
<dbReference type="PATRIC" id="fig|197221.4.peg.570"/>
<dbReference type="eggNOG" id="COG0158">
    <property type="taxonomic scope" value="Bacteria"/>
</dbReference>
<dbReference type="UniPathway" id="UPA00116"/>
<dbReference type="Proteomes" id="UP000000440">
    <property type="component" value="Chromosome"/>
</dbReference>
<dbReference type="GO" id="GO:0005829">
    <property type="term" value="C:cytosol"/>
    <property type="evidence" value="ECO:0007669"/>
    <property type="project" value="TreeGrafter"/>
</dbReference>
<dbReference type="GO" id="GO:0042132">
    <property type="term" value="F:fructose 1,6-bisphosphate 1-phosphatase activity"/>
    <property type="evidence" value="ECO:0007669"/>
    <property type="project" value="UniProtKB-UniRule"/>
</dbReference>
<dbReference type="GO" id="GO:0000287">
    <property type="term" value="F:magnesium ion binding"/>
    <property type="evidence" value="ECO:0007669"/>
    <property type="project" value="UniProtKB-UniRule"/>
</dbReference>
<dbReference type="GO" id="GO:0030388">
    <property type="term" value="P:fructose 1,6-bisphosphate metabolic process"/>
    <property type="evidence" value="ECO:0007669"/>
    <property type="project" value="TreeGrafter"/>
</dbReference>
<dbReference type="GO" id="GO:0006002">
    <property type="term" value="P:fructose 6-phosphate metabolic process"/>
    <property type="evidence" value="ECO:0007669"/>
    <property type="project" value="TreeGrafter"/>
</dbReference>
<dbReference type="GO" id="GO:0006000">
    <property type="term" value="P:fructose metabolic process"/>
    <property type="evidence" value="ECO:0007669"/>
    <property type="project" value="TreeGrafter"/>
</dbReference>
<dbReference type="GO" id="GO:0006094">
    <property type="term" value="P:gluconeogenesis"/>
    <property type="evidence" value="ECO:0007669"/>
    <property type="project" value="UniProtKB-UniRule"/>
</dbReference>
<dbReference type="GO" id="GO:0019253">
    <property type="term" value="P:reductive pentose-phosphate cycle"/>
    <property type="evidence" value="ECO:0007669"/>
    <property type="project" value="UniProtKB-UniRule"/>
</dbReference>
<dbReference type="GO" id="GO:0005986">
    <property type="term" value="P:sucrose biosynthetic process"/>
    <property type="evidence" value="ECO:0007669"/>
    <property type="project" value="TreeGrafter"/>
</dbReference>
<dbReference type="CDD" id="cd00354">
    <property type="entry name" value="FBPase"/>
    <property type="match status" value="1"/>
</dbReference>
<dbReference type="FunFam" id="3.30.540.10:FF:000002">
    <property type="entry name" value="Fructose-1,6-bisphosphatase class 1"/>
    <property type="match status" value="1"/>
</dbReference>
<dbReference type="Gene3D" id="3.40.190.80">
    <property type="match status" value="1"/>
</dbReference>
<dbReference type="Gene3D" id="3.30.540.10">
    <property type="entry name" value="Fructose-1,6-Bisphosphatase, subunit A, domain 1"/>
    <property type="match status" value="1"/>
</dbReference>
<dbReference type="HAMAP" id="MF_01855">
    <property type="entry name" value="FBPase_class1"/>
    <property type="match status" value="1"/>
</dbReference>
<dbReference type="InterPro" id="IPR044015">
    <property type="entry name" value="FBPase_C_dom"/>
</dbReference>
<dbReference type="InterPro" id="IPR000146">
    <property type="entry name" value="FBPase_class-1"/>
</dbReference>
<dbReference type="InterPro" id="IPR033391">
    <property type="entry name" value="FBPase_N"/>
</dbReference>
<dbReference type="InterPro" id="IPR028343">
    <property type="entry name" value="FBPtase"/>
</dbReference>
<dbReference type="InterPro" id="IPR020548">
    <property type="entry name" value="Fructose_bisphosphatase_AS"/>
</dbReference>
<dbReference type="NCBIfam" id="NF006778">
    <property type="entry name" value="PRK09293.1-1"/>
    <property type="match status" value="1"/>
</dbReference>
<dbReference type="PANTHER" id="PTHR11556">
    <property type="entry name" value="FRUCTOSE-1,6-BISPHOSPHATASE-RELATED"/>
    <property type="match status" value="1"/>
</dbReference>
<dbReference type="PANTHER" id="PTHR11556:SF35">
    <property type="entry name" value="SEDOHEPTULOSE-1,7-BISPHOSPHATASE, CHLOROPLASTIC"/>
    <property type="match status" value="1"/>
</dbReference>
<dbReference type="Pfam" id="PF00316">
    <property type="entry name" value="FBPase"/>
    <property type="match status" value="1"/>
</dbReference>
<dbReference type="Pfam" id="PF18913">
    <property type="entry name" value="FBPase_C"/>
    <property type="match status" value="1"/>
</dbReference>
<dbReference type="PIRSF" id="PIRSF500210">
    <property type="entry name" value="FBPtase"/>
    <property type="match status" value="1"/>
</dbReference>
<dbReference type="PIRSF" id="PIRSF000904">
    <property type="entry name" value="FBPtase_SBPase"/>
    <property type="match status" value="1"/>
</dbReference>
<dbReference type="PRINTS" id="PR00115">
    <property type="entry name" value="F16BPHPHTASE"/>
</dbReference>
<dbReference type="SUPFAM" id="SSF56655">
    <property type="entry name" value="Carbohydrate phosphatase"/>
    <property type="match status" value="1"/>
</dbReference>
<dbReference type="PROSITE" id="PS00124">
    <property type="entry name" value="FBPASE"/>
    <property type="match status" value="1"/>
</dbReference>
<feature type="chain" id="PRO_0000364733" description="Fructose-1,6-bisphosphatase class 1">
    <location>
        <begin position="1"/>
        <end position="348"/>
    </location>
</feature>
<feature type="binding site" evidence="1">
    <location>
        <position position="104"/>
    </location>
    <ligand>
        <name>Mg(2+)</name>
        <dbReference type="ChEBI" id="CHEBI:18420"/>
        <label>1</label>
    </ligand>
</feature>
<feature type="binding site" evidence="1">
    <location>
        <position position="126"/>
    </location>
    <ligand>
        <name>Mg(2+)</name>
        <dbReference type="ChEBI" id="CHEBI:18420"/>
        <label>1</label>
    </ligand>
</feature>
<feature type="binding site" evidence="1">
    <location>
        <position position="126"/>
    </location>
    <ligand>
        <name>Mg(2+)</name>
        <dbReference type="ChEBI" id="CHEBI:18420"/>
        <label>2</label>
    </ligand>
</feature>
<feature type="binding site" evidence="1">
    <location>
        <position position="128"/>
    </location>
    <ligand>
        <name>Mg(2+)</name>
        <dbReference type="ChEBI" id="CHEBI:18420"/>
        <label>1</label>
    </ligand>
</feature>
<feature type="binding site" evidence="1">
    <location>
        <begin position="129"/>
        <end position="132"/>
    </location>
    <ligand>
        <name>substrate</name>
    </ligand>
</feature>
<feature type="binding site" evidence="1">
    <location>
        <position position="129"/>
    </location>
    <ligand>
        <name>Mg(2+)</name>
        <dbReference type="ChEBI" id="CHEBI:18420"/>
        <label>2</label>
    </ligand>
</feature>
<feature type="binding site" evidence="1">
    <location>
        <position position="221"/>
    </location>
    <ligand>
        <name>substrate</name>
    </ligand>
</feature>
<feature type="binding site" evidence="1">
    <location>
        <position position="249"/>
    </location>
    <ligand>
        <name>substrate</name>
    </ligand>
</feature>
<feature type="binding site" evidence="1">
    <location>
        <position position="279"/>
    </location>
    <ligand>
        <name>substrate</name>
    </ligand>
</feature>
<feature type="binding site" evidence="1">
    <location>
        <position position="285"/>
    </location>
    <ligand>
        <name>Mg(2+)</name>
        <dbReference type="ChEBI" id="CHEBI:18420"/>
        <label>2</label>
    </ligand>
</feature>
<proteinExistence type="inferred from homology"/>
<sequence length="348" mass="37943">MTDYAAHQQALDRDCLTLSRHVLQQLQSFDAAAQDLSALMNRIALAGKLIARRLSRAGLMEGVLGFTGAVNIQGEDVKKMDVYANEVFIAAFKQSGLVCRLASEEMAQPYYIPENCPIGRYTLLYDPLDGSSNVDINLNVGSIFAIRQQEGTDLDSTAADLLQDGHQQIAAGYILYGPSTMLVYSLGKGTHVFVLDPSLGEFILAIENLQIPASGAIYSVNEGNFWAWEEPIRNYVRHVHRQPGYSARYSGALVADIHRILMEGGVFLYPGTQKNPAGKLRLLYEAAPIAFLVEQAGGKASTGTQPLLDVVPDHLHMRTPLIVGSPENVALVESFIQQTPAQPTVTQV</sequence>
<comment type="catalytic activity">
    <reaction evidence="1">
        <text>beta-D-fructose 1,6-bisphosphate + H2O = beta-D-fructose 6-phosphate + phosphate</text>
        <dbReference type="Rhea" id="RHEA:11064"/>
        <dbReference type="ChEBI" id="CHEBI:15377"/>
        <dbReference type="ChEBI" id="CHEBI:32966"/>
        <dbReference type="ChEBI" id="CHEBI:43474"/>
        <dbReference type="ChEBI" id="CHEBI:57634"/>
        <dbReference type="EC" id="3.1.3.11"/>
    </reaction>
</comment>
<comment type="cofactor">
    <cofactor evidence="1">
        <name>Mg(2+)</name>
        <dbReference type="ChEBI" id="CHEBI:18420"/>
    </cofactor>
    <text evidence="1">Binds 2 magnesium ions per subunit.</text>
</comment>
<comment type="pathway">
    <text evidence="1">Carbohydrate biosynthesis; Calvin cycle.</text>
</comment>
<comment type="subunit">
    <text evidence="1">Homotetramer.</text>
</comment>
<comment type="subcellular location">
    <subcellularLocation>
        <location evidence="1">Cytoplasm</location>
    </subcellularLocation>
</comment>
<comment type="similarity">
    <text evidence="1">Belongs to the FBPase class 1 family.</text>
</comment>
<reference key="1">
    <citation type="journal article" date="2002" name="DNA Res.">
        <title>Complete genome structure of the thermophilic cyanobacterium Thermosynechococcus elongatus BP-1.</title>
        <authorList>
            <person name="Nakamura Y."/>
            <person name="Kaneko T."/>
            <person name="Sato S."/>
            <person name="Ikeuchi M."/>
            <person name="Katoh H."/>
            <person name="Sasamoto S."/>
            <person name="Watanabe A."/>
            <person name="Iriguchi M."/>
            <person name="Kawashima K."/>
            <person name="Kimura T."/>
            <person name="Kishida Y."/>
            <person name="Kiyokawa C."/>
            <person name="Kohara M."/>
            <person name="Matsumoto M."/>
            <person name="Matsuno A."/>
            <person name="Nakazaki N."/>
            <person name="Shimpo S."/>
            <person name="Sugimoto M."/>
            <person name="Takeuchi C."/>
            <person name="Yamada M."/>
            <person name="Tabata S."/>
        </authorList>
    </citation>
    <scope>NUCLEOTIDE SEQUENCE [LARGE SCALE GENOMIC DNA]</scope>
    <source>
        <strain>NIES-2133 / IAM M-273 / BP-1</strain>
    </source>
</reference>
<name>F16PA_THEVB</name>
<keyword id="KW-0113">Calvin cycle</keyword>
<keyword id="KW-0119">Carbohydrate metabolism</keyword>
<keyword id="KW-0963">Cytoplasm</keyword>
<keyword id="KW-0378">Hydrolase</keyword>
<keyword id="KW-0460">Magnesium</keyword>
<keyword id="KW-0479">Metal-binding</keyword>
<keyword id="KW-1185">Reference proteome</keyword>
<evidence type="ECO:0000255" key="1">
    <source>
        <dbReference type="HAMAP-Rule" id="MF_01855"/>
    </source>
</evidence>
<gene>
    <name evidence="1" type="primary">fbp</name>
    <name type="ordered locus">tll0541</name>
</gene>
<organism>
    <name type="scientific">Thermosynechococcus vestitus (strain NIES-2133 / IAM M-273 / BP-1)</name>
    <dbReference type="NCBI Taxonomy" id="197221"/>
    <lineage>
        <taxon>Bacteria</taxon>
        <taxon>Bacillati</taxon>
        <taxon>Cyanobacteriota</taxon>
        <taxon>Cyanophyceae</taxon>
        <taxon>Acaryochloridales</taxon>
        <taxon>Thermosynechococcaceae</taxon>
        <taxon>Thermosynechococcus</taxon>
    </lineage>
</organism>
<protein>
    <recommendedName>
        <fullName evidence="1">Fructose-1,6-bisphosphatase class 1</fullName>
        <shortName evidence="1">FBPase class 1</shortName>
        <ecNumber evidence="1">3.1.3.11</ecNumber>
    </recommendedName>
    <alternativeName>
        <fullName evidence="1">D-fructose-1,6-bisphosphate 1-phosphohydrolase class 1</fullName>
    </alternativeName>
</protein>